<feature type="initiator methionine" description="Removed" evidence="2">
    <location>
        <position position="1"/>
    </location>
</feature>
<feature type="chain" id="PRO_0000385248" description="Nuclear cap-binding protein subunit 2">
    <location>
        <begin position="2"/>
        <end position="156"/>
    </location>
</feature>
<feature type="domain" description="RRM" evidence="3">
    <location>
        <begin position="40"/>
        <end position="118"/>
    </location>
</feature>
<feature type="region of interest" description="Disordered" evidence="4">
    <location>
        <begin position="124"/>
        <end position="156"/>
    </location>
</feature>
<feature type="compositionally biased region" description="Basic and acidic residues" evidence="4">
    <location>
        <begin position="134"/>
        <end position="144"/>
    </location>
</feature>
<feature type="binding site" evidence="1">
    <location>
        <position position="20"/>
    </location>
    <ligand>
        <name>mRNA</name>
        <dbReference type="ChEBI" id="CHEBI:33699"/>
    </ligand>
    <ligandPart>
        <name>mRNA cap</name>
    </ligandPart>
</feature>
<feature type="binding site" evidence="1">
    <location>
        <position position="43"/>
    </location>
    <ligand>
        <name>mRNA</name>
        <dbReference type="ChEBI" id="CHEBI:33699"/>
    </ligand>
    <ligandPart>
        <name>mRNA cap</name>
    </ligandPart>
</feature>
<feature type="binding site" evidence="1">
    <location>
        <begin position="112"/>
        <end position="116"/>
    </location>
    <ligand>
        <name>mRNA</name>
        <dbReference type="ChEBI" id="CHEBI:33699"/>
    </ligand>
    <ligandPart>
        <name>mRNA cap</name>
    </ligandPart>
</feature>
<feature type="binding site" evidence="1">
    <location>
        <begin position="123"/>
        <end position="127"/>
    </location>
    <ligand>
        <name>mRNA</name>
        <dbReference type="ChEBI" id="CHEBI:33699"/>
    </ligand>
    <ligandPart>
        <name>mRNA cap</name>
    </ligandPart>
</feature>
<feature type="binding site" evidence="1">
    <location>
        <begin position="133"/>
        <end position="134"/>
    </location>
    <ligand>
        <name>mRNA</name>
        <dbReference type="ChEBI" id="CHEBI:33699"/>
    </ligand>
    <ligandPart>
        <name>mRNA cap</name>
    </ligandPart>
</feature>
<feature type="modified residue" description="N-acetylserine" evidence="2">
    <location>
        <position position="2"/>
    </location>
</feature>
<feature type="modified residue" description="Phosphoserine" evidence="6">
    <location>
        <position position="13"/>
    </location>
</feature>
<feature type="modified residue" description="Phosphoserine" evidence="2">
    <location>
        <position position="18"/>
    </location>
</feature>
<feature type="modified residue" description="Omega-N-methylarginine" evidence="2">
    <location>
        <position position="146"/>
    </location>
</feature>
<proteinExistence type="evidence at protein level"/>
<name>NCBP2_RAT</name>
<gene>
    <name type="primary">Ncbp2</name>
    <name type="synonym">Cbp20</name>
</gene>
<sequence>MSGGLLKALRSDSYVELSEYRDQHFRGDNEEQEKLLKKSCTLYVGNLSFYTTEEQIYELFSKSGDIKKIIMGLDKMKKTACGFCFVEYYSRADAENAMRYINGTRLDDRIIRTDWDAGFKEGRQYGRGRSGGQVRDEYREDYDAGRGGYGKLAQKQ</sequence>
<organism>
    <name type="scientific">Rattus norvegicus</name>
    <name type="common">Rat</name>
    <dbReference type="NCBI Taxonomy" id="10116"/>
    <lineage>
        <taxon>Eukaryota</taxon>
        <taxon>Metazoa</taxon>
        <taxon>Chordata</taxon>
        <taxon>Craniata</taxon>
        <taxon>Vertebrata</taxon>
        <taxon>Euteleostomi</taxon>
        <taxon>Mammalia</taxon>
        <taxon>Eutheria</taxon>
        <taxon>Euarchontoglires</taxon>
        <taxon>Glires</taxon>
        <taxon>Rodentia</taxon>
        <taxon>Myomorpha</taxon>
        <taxon>Muroidea</taxon>
        <taxon>Muridae</taxon>
        <taxon>Murinae</taxon>
        <taxon>Rattus</taxon>
    </lineage>
</organism>
<dbReference type="EMBL" id="BC161994">
    <property type="protein sequence ID" value="AAI61994.1"/>
    <property type="molecule type" value="mRNA"/>
</dbReference>
<dbReference type="RefSeq" id="NP_001102995.1">
    <property type="nucleotide sequence ID" value="NM_001109525.1"/>
</dbReference>
<dbReference type="SMR" id="B1WC40"/>
<dbReference type="FunCoup" id="B1WC40">
    <property type="interactions" value="3782"/>
</dbReference>
<dbReference type="STRING" id="10116.ENSRNOP00000002381"/>
<dbReference type="iPTMnet" id="B1WC40"/>
<dbReference type="PhosphoSitePlus" id="B1WC40"/>
<dbReference type="PaxDb" id="10116-ENSRNOP00000002381"/>
<dbReference type="PeptideAtlas" id="B1WC40"/>
<dbReference type="GeneID" id="689116"/>
<dbReference type="KEGG" id="rno:689116"/>
<dbReference type="UCSC" id="RGD:1596188">
    <property type="organism name" value="rat"/>
</dbReference>
<dbReference type="AGR" id="RGD:1596188"/>
<dbReference type="CTD" id="22916"/>
<dbReference type="RGD" id="1596188">
    <property type="gene designation" value="Ncbp2"/>
</dbReference>
<dbReference type="VEuPathDB" id="HostDB:ENSRNOG00000001746"/>
<dbReference type="eggNOG" id="KOG0121">
    <property type="taxonomic scope" value="Eukaryota"/>
</dbReference>
<dbReference type="HOGENOM" id="CLU_070952_2_0_1"/>
<dbReference type="InParanoid" id="B1WC40"/>
<dbReference type="OrthoDB" id="34280at9989"/>
<dbReference type="PhylomeDB" id="B1WC40"/>
<dbReference type="TreeFam" id="TF313897"/>
<dbReference type="Reactome" id="R-RNO-111367">
    <property type="pathway name" value="SLBP independent Processing of Histone Pre-mRNAs"/>
</dbReference>
<dbReference type="Reactome" id="R-RNO-112382">
    <property type="pathway name" value="Formation of RNA Pol II elongation complex"/>
</dbReference>
<dbReference type="Reactome" id="R-RNO-113418">
    <property type="pathway name" value="Formation of the Early Elongation Complex"/>
</dbReference>
<dbReference type="Reactome" id="R-RNO-159227">
    <property type="pathway name" value="Transport of the SLBP independent Mature mRNA"/>
</dbReference>
<dbReference type="Reactome" id="R-RNO-159230">
    <property type="pathway name" value="Transport of the SLBP Dependant Mature mRNA"/>
</dbReference>
<dbReference type="Reactome" id="R-RNO-159231">
    <property type="pathway name" value="Transport of Mature mRNA Derived from an Intronless Transcript"/>
</dbReference>
<dbReference type="Reactome" id="R-RNO-159236">
    <property type="pathway name" value="Transport of Mature mRNA derived from an Intron-Containing Transcript"/>
</dbReference>
<dbReference type="Reactome" id="R-RNO-674695">
    <property type="pathway name" value="RNA Polymerase II Pre-transcription Events"/>
</dbReference>
<dbReference type="Reactome" id="R-RNO-6803529">
    <property type="pathway name" value="FGFR2 alternative splicing"/>
</dbReference>
<dbReference type="Reactome" id="R-RNO-6807505">
    <property type="pathway name" value="RNA polymerase II transcribes snRNA genes"/>
</dbReference>
<dbReference type="Reactome" id="R-RNO-72086">
    <property type="pathway name" value="mRNA Capping"/>
</dbReference>
<dbReference type="Reactome" id="R-RNO-72163">
    <property type="pathway name" value="mRNA Splicing - Major Pathway"/>
</dbReference>
<dbReference type="Reactome" id="R-RNO-72165">
    <property type="pathway name" value="mRNA Splicing - Minor Pathway"/>
</dbReference>
<dbReference type="Reactome" id="R-RNO-72187">
    <property type="pathway name" value="mRNA 3'-end processing"/>
</dbReference>
<dbReference type="Reactome" id="R-RNO-72203">
    <property type="pathway name" value="Processing of Capped Intron-Containing Pre-mRNA"/>
</dbReference>
<dbReference type="Reactome" id="R-RNO-73856">
    <property type="pathway name" value="RNA Polymerase II Transcription Termination"/>
</dbReference>
<dbReference type="Reactome" id="R-RNO-77588">
    <property type="pathway name" value="SLBP Dependent Processing of Replication-Dependent Histone Pre-mRNAs"/>
</dbReference>
<dbReference type="Reactome" id="R-RNO-77595">
    <property type="pathway name" value="Processing of Intronless Pre-mRNAs"/>
</dbReference>
<dbReference type="Reactome" id="R-RNO-975956">
    <property type="pathway name" value="Nonsense Mediated Decay (NMD) independent of the Exon Junction Complex (EJC)"/>
</dbReference>
<dbReference type="Reactome" id="R-RNO-975957">
    <property type="pathway name" value="Nonsense Mediated Decay (NMD) enhanced by the Exon Junction Complex (EJC)"/>
</dbReference>
<dbReference type="PRO" id="PR:B1WC40"/>
<dbReference type="Proteomes" id="UP000002494">
    <property type="component" value="Chromosome 11"/>
</dbReference>
<dbReference type="Bgee" id="ENSRNOG00000001746">
    <property type="expression patterns" value="Expressed in thymus and 19 other cell types or tissues"/>
</dbReference>
<dbReference type="GO" id="GO:0005737">
    <property type="term" value="C:cytoplasm"/>
    <property type="evidence" value="ECO:0000266"/>
    <property type="project" value="RGD"/>
</dbReference>
<dbReference type="GO" id="GO:0005846">
    <property type="term" value="C:nuclear cap binding complex"/>
    <property type="evidence" value="ECO:0000314"/>
    <property type="project" value="RGD"/>
</dbReference>
<dbReference type="GO" id="GO:0005654">
    <property type="term" value="C:nucleoplasm"/>
    <property type="evidence" value="ECO:0000266"/>
    <property type="project" value="RGD"/>
</dbReference>
<dbReference type="GO" id="GO:0005634">
    <property type="term" value="C:nucleus"/>
    <property type="evidence" value="ECO:0000266"/>
    <property type="project" value="RGD"/>
</dbReference>
<dbReference type="GO" id="GO:0034518">
    <property type="term" value="C:RNA cap binding complex"/>
    <property type="evidence" value="ECO:0000266"/>
    <property type="project" value="RGD"/>
</dbReference>
<dbReference type="GO" id="GO:0003677">
    <property type="term" value="F:DNA binding"/>
    <property type="evidence" value="ECO:0000266"/>
    <property type="project" value="RGD"/>
</dbReference>
<dbReference type="GO" id="GO:0003729">
    <property type="term" value="F:mRNA binding"/>
    <property type="evidence" value="ECO:0000250"/>
    <property type="project" value="UniProtKB"/>
</dbReference>
<dbReference type="GO" id="GO:0000340">
    <property type="term" value="F:RNA 7-methylguanosine cap binding"/>
    <property type="evidence" value="ECO:0000314"/>
    <property type="project" value="RGD"/>
</dbReference>
<dbReference type="GO" id="GO:0000339">
    <property type="term" value="F:RNA cap binding"/>
    <property type="evidence" value="ECO:0000318"/>
    <property type="project" value="GO_Central"/>
</dbReference>
<dbReference type="GO" id="GO:0017069">
    <property type="term" value="F:snRNA binding"/>
    <property type="evidence" value="ECO:0000250"/>
    <property type="project" value="UniProtKB"/>
</dbReference>
<dbReference type="GO" id="GO:0008334">
    <property type="term" value="P:histone mRNA metabolic process"/>
    <property type="evidence" value="ECO:0000266"/>
    <property type="project" value="RGD"/>
</dbReference>
<dbReference type="GO" id="GO:0045292">
    <property type="term" value="P:mRNA cis splicing, via spliceosome"/>
    <property type="evidence" value="ECO:0000250"/>
    <property type="project" value="UniProtKB"/>
</dbReference>
<dbReference type="GO" id="GO:0006406">
    <property type="term" value="P:mRNA export from nucleus"/>
    <property type="evidence" value="ECO:0000266"/>
    <property type="project" value="RGD"/>
</dbReference>
<dbReference type="GO" id="GO:0016071">
    <property type="term" value="P:mRNA metabolic process"/>
    <property type="evidence" value="ECO:0000266"/>
    <property type="project" value="RGD"/>
</dbReference>
<dbReference type="GO" id="GO:0000398">
    <property type="term" value="P:mRNA splicing, via spliceosome"/>
    <property type="evidence" value="ECO:0000318"/>
    <property type="project" value="GO_Central"/>
</dbReference>
<dbReference type="GO" id="GO:0042789">
    <property type="term" value="P:mRNA transcription by RNA polymerase II"/>
    <property type="evidence" value="ECO:0000266"/>
    <property type="project" value="RGD"/>
</dbReference>
<dbReference type="GO" id="GO:0000184">
    <property type="term" value="P:nuclear-transcribed mRNA catabolic process, nonsense-mediated decay"/>
    <property type="evidence" value="ECO:0000266"/>
    <property type="project" value="RGD"/>
</dbReference>
<dbReference type="GO" id="GO:0031442">
    <property type="term" value="P:positive regulation of mRNA 3'-end processing"/>
    <property type="evidence" value="ECO:0000266"/>
    <property type="project" value="RGD"/>
</dbReference>
<dbReference type="GO" id="GO:0046833">
    <property type="term" value="P:positive regulation of RNA export from nucleus"/>
    <property type="evidence" value="ECO:0000250"/>
    <property type="project" value="UniProtKB"/>
</dbReference>
<dbReference type="GO" id="GO:0006446">
    <property type="term" value="P:regulation of translational initiation"/>
    <property type="evidence" value="ECO:0000266"/>
    <property type="project" value="RGD"/>
</dbReference>
<dbReference type="GO" id="GO:0031047">
    <property type="term" value="P:regulatory ncRNA-mediated gene silencing"/>
    <property type="evidence" value="ECO:0007669"/>
    <property type="project" value="UniProtKB-KW"/>
</dbReference>
<dbReference type="GO" id="GO:0008380">
    <property type="term" value="P:RNA splicing"/>
    <property type="evidence" value="ECO:0000250"/>
    <property type="project" value="UniProtKB"/>
</dbReference>
<dbReference type="GO" id="GO:0006408">
    <property type="term" value="P:snRNA export from nucleus"/>
    <property type="evidence" value="ECO:0000250"/>
    <property type="project" value="UniProtKB"/>
</dbReference>
<dbReference type="CDD" id="cd12240">
    <property type="entry name" value="RRM_NCBP2"/>
    <property type="match status" value="1"/>
</dbReference>
<dbReference type="FunFam" id="3.30.70.330:FF:000128">
    <property type="entry name" value="Nuclear cap-binding protein subunit 2"/>
    <property type="match status" value="1"/>
</dbReference>
<dbReference type="Gene3D" id="3.30.70.330">
    <property type="match status" value="1"/>
</dbReference>
<dbReference type="InterPro" id="IPR027157">
    <property type="entry name" value="NCBP2"/>
</dbReference>
<dbReference type="InterPro" id="IPR034148">
    <property type="entry name" value="NCBP2_RRM"/>
</dbReference>
<dbReference type="InterPro" id="IPR012677">
    <property type="entry name" value="Nucleotide-bd_a/b_plait_sf"/>
</dbReference>
<dbReference type="InterPro" id="IPR035979">
    <property type="entry name" value="RBD_domain_sf"/>
</dbReference>
<dbReference type="InterPro" id="IPR000504">
    <property type="entry name" value="RRM_dom"/>
</dbReference>
<dbReference type="PANTHER" id="PTHR18847">
    <property type="entry name" value="20 KD NUCLEAR CAP BINDING PROTEIN"/>
    <property type="match status" value="1"/>
</dbReference>
<dbReference type="PANTHER" id="PTHR18847:SF0">
    <property type="entry name" value="NUCLEAR CAP-BINDING PROTEIN SUBUNIT 2"/>
    <property type="match status" value="1"/>
</dbReference>
<dbReference type="Pfam" id="PF00076">
    <property type="entry name" value="RRM_1"/>
    <property type="match status" value="1"/>
</dbReference>
<dbReference type="SMART" id="SM00360">
    <property type="entry name" value="RRM"/>
    <property type="match status" value="1"/>
</dbReference>
<dbReference type="SUPFAM" id="SSF54928">
    <property type="entry name" value="RNA-binding domain, RBD"/>
    <property type="match status" value="1"/>
</dbReference>
<dbReference type="PROSITE" id="PS50102">
    <property type="entry name" value="RRM"/>
    <property type="match status" value="1"/>
</dbReference>
<accession>B1WC40</accession>
<protein>
    <recommendedName>
        <fullName>Nuclear cap-binding protein subunit 2</fullName>
    </recommendedName>
    <alternativeName>
        <fullName>20 kDa nuclear cap-binding protein</fullName>
    </alternativeName>
    <alternativeName>
        <fullName>NCBP 20 kDa subunit</fullName>
        <shortName>CBP20</shortName>
    </alternativeName>
</protein>
<evidence type="ECO:0000250" key="1"/>
<evidence type="ECO:0000250" key="2">
    <source>
        <dbReference type="UniProtKB" id="P52298"/>
    </source>
</evidence>
<evidence type="ECO:0000255" key="3">
    <source>
        <dbReference type="PROSITE-ProRule" id="PRU00176"/>
    </source>
</evidence>
<evidence type="ECO:0000256" key="4">
    <source>
        <dbReference type="SAM" id="MobiDB-lite"/>
    </source>
</evidence>
<evidence type="ECO:0000305" key="5"/>
<evidence type="ECO:0007744" key="6">
    <source>
    </source>
</evidence>
<keyword id="KW-0007">Acetylation</keyword>
<keyword id="KW-0963">Cytoplasm</keyword>
<keyword id="KW-0488">Methylation</keyword>
<keyword id="KW-0507">mRNA processing</keyword>
<keyword id="KW-0508">mRNA splicing</keyword>
<keyword id="KW-0509">mRNA transport</keyword>
<keyword id="KW-0866">Nonsense-mediated mRNA decay</keyword>
<keyword id="KW-0539">Nucleus</keyword>
<keyword id="KW-0597">Phosphoprotein</keyword>
<keyword id="KW-1185">Reference proteome</keyword>
<keyword id="KW-0694">RNA-binding</keyword>
<keyword id="KW-0943">RNA-mediated gene silencing</keyword>
<keyword id="KW-0810">Translation regulation</keyword>
<keyword id="KW-0813">Transport</keyword>
<comment type="function">
    <text evidence="2">Component of the cap-binding complex (CBC), which binds co-transcriptionally to the 5' cap of pre-mRNAs and is involved in various processes such as pre-mRNA splicing, translation regulation, nonsense-mediated mRNA decay, RNA-mediated gene silencing (RNAi) by microRNAs (miRNAs) and mRNA export. The CBC complex is involved in mRNA export from the nucleus via its interaction with ALYREF/THOC4/ALY, leading to the recruitment of the mRNA export machinery to the 5' end of mRNA and to mRNA export in a 5' to 3' direction through the nuclear pore. The CBC complex is also involved in mediating U snRNA and intronless mRNAs export from the nucleus. The CBC complex is essential for a pioneer round of mRNA translation, before steady state translation when the CBC complex is replaced by cytoplasmic cap-binding protein eIF4E. The pioneer round of mRNA translation mediated by the CBC complex plays a central role in nonsense-mediated mRNA decay (NMD), NMD only taking place in mRNAs bound to the CBC complex, but not on eIF4E-bound mRNAs. The CBC complex enhances NMD in mRNAs containing at least one exon-junction complex (EJC) via its interaction with UPF1, promoting the interaction between UPF1 and UPF2. The CBC complex is also involved in 'failsafe' NMD, which is independent of the EJC complex, while it does not participate in Staufen-mediated mRNA decay (SMD). During cell proliferation, the CBC complex is also involved in microRNAs (miRNAs) biogenesis via its interaction with SRRT/ARS2, thereby being required for miRNA-mediated RNA interference. The CBC complex also acts as a negative regulator of PARN, thereby acting as an inhibitor of mRNA deadenylation. In the CBC complex, NCBP2/CBP20 recognizes and binds capped RNAs (m7GpppG-capped RNA) but requires NCBP1/CBP80 to stabilize the movement of its N-terminal loop and lock the CBC into a high affinity cap-binding state with the cap structure. The conventional cap-binding complex with NCBP2 binds both small nuclear RNA (snRNA) and messenger (mRNA) and is involved in their export from the nucleus (By similarity).</text>
</comment>
<comment type="subunit">
    <text evidence="2">Component of the nuclear cap-binding complex (CBC), a heterodimer composed of NCBP1/CBP80 and NCBP2/CBP20 that interacts with m7GpppG-capped RNA. Found in a U snRNA export complex with PHAX/RNUXA, NCBP1/CBP80, NCBP2/CBP20, RAN, XPO1 and m7G-capped RNA. Interacts with PHAX/RNUXA, EIF4G1, HNRNPF, HNRNPH1 and ALYREF/THOC4/ALY. Interacts with SRRT/ARS2 and KPNA3 (By similarity).</text>
</comment>
<comment type="subcellular location">
    <subcellularLocation>
        <location evidence="2">Nucleus</location>
    </subcellularLocation>
    <subcellularLocation>
        <location evidence="2">Cytoplasm</location>
    </subcellularLocation>
</comment>
<comment type="similarity">
    <text evidence="5">Belongs to the RRM NCBP2 family.</text>
</comment>
<reference key="1">
    <citation type="journal article" date="2004" name="Genome Res.">
        <title>The status, quality, and expansion of the NIH full-length cDNA project: the Mammalian Gene Collection (MGC).</title>
        <authorList>
            <consortium name="The MGC Project Team"/>
        </authorList>
    </citation>
    <scope>NUCLEOTIDE SEQUENCE [LARGE SCALE MRNA]</scope>
    <source>
        <tissue>Heart</tissue>
    </source>
</reference>
<reference key="2">
    <citation type="journal article" date="2012" name="Nat. Commun.">
        <title>Quantitative maps of protein phosphorylation sites across 14 different rat organs and tissues.</title>
        <authorList>
            <person name="Lundby A."/>
            <person name="Secher A."/>
            <person name="Lage K."/>
            <person name="Nordsborg N.B."/>
            <person name="Dmytriyev A."/>
            <person name="Lundby C."/>
            <person name="Olsen J.V."/>
        </authorList>
    </citation>
    <scope>PHOSPHORYLATION [LARGE SCALE ANALYSIS] AT SER-13</scope>
    <scope>IDENTIFICATION BY MASS SPECTROMETRY [LARGE SCALE ANALYSIS]</scope>
</reference>